<protein>
    <recommendedName>
        <fullName evidence="1">Ketol-acid reductoisomerase (NADP(+))</fullName>
        <shortName evidence="1">KARI</shortName>
        <ecNumber evidence="1">1.1.1.86</ecNumber>
    </recommendedName>
    <alternativeName>
        <fullName evidence="1">Acetohydroxy-acid isomeroreductase</fullName>
        <shortName evidence="1">AHIR</shortName>
    </alternativeName>
    <alternativeName>
        <fullName evidence="1">Alpha-keto-beta-hydroxylacyl reductoisomerase</fullName>
    </alternativeName>
    <alternativeName>
        <fullName evidence="1">Ketol-acid reductoisomerase type 1</fullName>
    </alternativeName>
    <alternativeName>
        <fullName evidence="1">Ketol-acid reductoisomerase type I</fullName>
    </alternativeName>
</protein>
<feature type="chain" id="PRO_1000050571" description="Ketol-acid reductoisomerase (NADP(+))">
    <location>
        <begin position="1"/>
        <end position="340"/>
    </location>
</feature>
<feature type="domain" description="KARI N-terminal Rossmann" evidence="2">
    <location>
        <begin position="1"/>
        <end position="182"/>
    </location>
</feature>
<feature type="domain" description="KARI C-terminal knotted" evidence="3">
    <location>
        <begin position="183"/>
        <end position="329"/>
    </location>
</feature>
<feature type="active site" evidence="1">
    <location>
        <position position="108"/>
    </location>
</feature>
<feature type="binding site" evidence="1">
    <location>
        <begin position="24"/>
        <end position="27"/>
    </location>
    <ligand>
        <name>NADP(+)</name>
        <dbReference type="ChEBI" id="CHEBI:58349"/>
    </ligand>
</feature>
<feature type="binding site" evidence="1">
    <location>
        <position position="48"/>
    </location>
    <ligand>
        <name>NADP(+)</name>
        <dbReference type="ChEBI" id="CHEBI:58349"/>
    </ligand>
</feature>
<feature type="binding site" evidence="1">
    <location>
        <position position="51"/>
    </location>
    <ligand>
        <name>NADP(+)</name>
        <dbReference type="ChEBI" id="CHEBI:58349"/>
    </ligand>
</feature>
<feature type="binding site" evidence="1">
    <location>
        <position position="53"/>
    </location>
    <ligand>
        <name>NADP(+)</name>
        <dbReference type="ChEBI" id="CHEBI:58349"/>
    </ligand>
</feature>
<feature type="binding site" evidence="1">
    <location>
        <begin position="83"/>
        <end position="86"/>
    </location>
    <ligand>
        <name>NADP(+)</name>
        <dbReference type="ChEBI" id="CHEBI:58349"/>
    </ligand>
</feature>
<feature type="binding site" evidence="1">
    <location>
        <position position="134"/>
    </location>
    <ligand>
        <name>NADP(+)</name>
        <dbReference type="ChEBI" id="CHEBI:58349"/>
    </ligand>
</feature>
<feature type="binding site" evidence="1">
    <location>
        <position position="191"/>
    </location>
    <ligand>
        <name>Mg(2+)</name>
        <dbReference type="ChEBI" id="CHEBI:18420"/>
        <label>1</label>
    </ligand>
</feature>
<feature type="binding site" evidence="1">
    <location>
        <position position="191"/>
    </location>
    <ligand>
        <name>Mg(2+)</name>
        <dbReference type="ChEBI" id="CHEBI:18420"/>
        <label>2</label>
    </ligand>
</feature>
<feature type="binding site" evidence="1">
    <location>
        <position position="195"/>
    </location>
    <ligand>
        <name>Mg(2+)</name>
        <dbReference type="ChEBI" id="CHEBI:18420"/>
        <label>1</label>
    </ligand>
</feature>
<feature type="binding site" evidence="1">
    <location>
        <position position="227"/>
    </location>
    <ligand>
        <name>Mg(2+)</name>
        <dbReference type="ChEBI" id="CHEBI:18420"/>
        <label>2</label>
    </ligand>
</feature>
<feature type="binding site" evidence="1">
    <location>
        <position position="231"/>
    </location>
    <ligand>
        <name>Mg(2+)</name>
        <dbReference type="ChEBI" id="CHEBI:18420"/>
        <label>2</label>
    </ligand>
</feature>
<feature type="binding site" evidence="1">
    <location>
        <position position="252"/>
    </location>
    <ligand>
        <name>substrate</name>
    </ligand>
</feature>
<name>ILVC_CERS5</name>
<gene>
    <name evidence="1" type="primary">ilvC</name>
    <name type="ordered locus">Rsph17025_0651</name>
</gene>
<comment type="function">
    <text evidence="1">Involved in the biosynthesis of branched-chain amino acids (BCAA). Catalyzes an alkyl-migration followed by a ketol-acid reduction of (S)-2-acetolactate (S2AL) to yield (R)-2,3-dihydroxy-isovalerate. In the isomerase reaction, S2AL is rearranged via a Mg-dependent methyl migration to produce 3-hydroxy-3-methyl-2-ketobutyrate (HMKB). In the reductase reaction, this 2-ketoacid undergoes a metal-dependent reduction by NADPH to yield (R)-2,3-dihydroxy-isovalerate.</text>
</comment>
<comment type="catalytic activity">
    <reaction evidence="1">
        <text>(2R)-2,3-dihydroxy-3-methylbutanoate + NADP(+) = (2S)-2-acetolactate + NADPH + H(+)</text>
        <dbReference type="Rhea" id="RHEA:22068"/>
        <dbReference type="ChEBI" id="CHEBI:15378"/>
        <dbReference type="ChEBI" id="CHEBI:49072"/>
        <dbReference type="ChEBI" id="CHEBI:57783"/>
        <dbReference type="ChEBI" id="CHEBI:58349"/>
        <dbReference type="ChEBI" id="CHEBI:58476"/>
        <dbReference type="EC" id="1.1.1.86"/>
    </reaction>
</comment>
<comment type="catalytic activity">
    <reaction evidence="1">
        <text>(2R,3R)-2,3-dihydroxy-3-methylpentanoate + NADP(+) = (S)-2-ethyl-2-hydroxy-3-oxobutanoate + NADPH + H(+)</text>
        <dbReference type="Rhea" id="RHEA:13493"/>
        <dbReference type="ChEBI" id="CHEBI:15378"/>
        <dbReference type="ChEBI" id="CHEBI:49256"/>
        <dbReference type="ChEBI" id="CHEBI:49258"/>
        <dbReference type="ChEBI" id="CHEBI:57783"/>
        <dbReference type="ChEBI" id="CHEBI:58349"/>
        <dbReference type="EC" id="1.1.1.86"/>
    </reaction>
</comment>
<comment type="cofactor">
    <cofactor evidence="1">
        <name>Mg(2+)</name>
        <dbReference type="ChEBI" id="CHEBI:18420"/>
    </cofactor>
    <text evidence="1">Binds 2 magnesium ions per subunit.</text>
</comment>
<comment type="pathway">
    <text evidence="1">Amino-acid biosynthesis; L-isoleucine biosynthesis; L-isoleucine from 2-oxobutanoate: step 2/4.</text>
</comment>
<comment type="pathway">
    <text evidence="1">Amino-acid biosynthesis; L-valine biosynthesis; L-valine from pyruvate: step 2/4.</text>
</comment>
<comment type="similarity">
    <text evidence="1">Belongs to the ketol-acid reductoisomerase family.</text>
</comment>
<sequence>MRVYYDRDCDINLIKDKKVAILGYGSQGHAHALNLRDSGAKNVVVALREGSPSAKKAEAEGLKVMGIAEAAAWCDLIMFTMPDELQAETYKKYVHDNLKEGSAIAFAHGLNVHFGLIEPKPGVDVIMMAPKGPGHTVRGEYVKGGGVPCLVAVHNDATGKAMEIGLSYCSAIGGGRSGIIETNFRQECETDLFGEQAVLCGGLVELIRMGFETLVEAGYEPEMAYFECLHEVKLIVDLIYEGGIANMNYSISNTAEYGEYVSGPRILPYEETKARMKAVLTDIQTGKFVRDFMQENAVGQPFFKATRRINDEHQIEKVGEKLRGMMPWISKGKMVDRARN</sequence>
<dbReference type="EC" id="1.1.1.86" evidence="1"/>
<dbReference type="EMBL" id="CP000661">
    <property type="protein sequence ID" value="ABP69557.1"/>
    <property type="molecule type" value="Genomic_DNA"/>
</dbReference>
<dbReference type="SMR" id="A4WQ93"/>
<dbReference type="STRING" id="349102.Rsph17025_0651"/>
<dbReference type="KEGG" id="rsq:Rsph17025_0651"/>
<dbReference type="eggNOG" id="COG0059">
    <property type="taxonomic scope" value="Bacteria"/>
</dbReference>
<dbReference type="HOGENOM" id="CLU_033821_0_1_5"/>
<dbReference type="BioCyc" id="RSPH349102:G1G8M-672-MONOMER"/>
<dbReference type="UniPathway" id="UPA00047">
    <property type="reaction ID" value="UER00056"/>
</dbReference>
<dbReference type="UniPathway" id="UPA00049">
    <property type="reaction ID" value="UER00060"/>
</dbReference>
<dbReference type="GO" id="GO:0005829">
    <property type="term" value="C:cytosol"/>
    <property type="evidence" value="ECO:0007669"/>
    <property type="project" value="TreeGrafter"/>
</dbReference>
<dbReference type="GO" id="GO:0004455">
    <property type="term" value="F:ketol-acid reductoisomerase activity"/>
    <property type="evidence" value="ECO:0007669"/>
    <property type="project" value="UniProtKB-UniRule"/>
</dbReference>
<dbReference type="GO" id="GO:0000287">
    <property type="term" value="F:magnesium ion binding"/>
    <property type="evidence" value="ECO:0007669"/>
    <property type="project" value="UniProtKB-UniRule"/>
</dbReference>
<dbReference type="GO" id="GO:0050661">
    <property type="term" value="F:NADP binding"/>
    <property type="evidence" value="ECO:0007669"/>
    <property type="project" value="InterPro"/>
</dbReference>
<dbReference type="GO" id="GO:0009097">
    <property type="term" value="P:isoleucine biosynthetic process"/>
    <property type="evidence" value="ECO:0007669"/>
    <property type="project" value="UniProtKB-UniRule"/>
</dbReference>
<dbReference type="GO" id="GO:0009099">
    <property type="term" value="P:L-valine biosynthetic process"/>
    <property type="evidence" value="ECO:0007669"/>
    <property type="project" value="UniProtKB-UniRule"/>
</dbReference>
<dbReference type="FunFam" id="3.40.50.720:FF:000023">
    <property type="entry name" value="Ketol-acid reductoisomerase (NADP(+))"/>
    <property type="match status" value="1"/>
</dbReference>
<dbReference type="Gene3D" id="6.10.240.10">
    <property type="match status" value="1"/>
</dbReference>
<dbReference type="Gene3D" id="3.40.50.720">
    <property type="entry name" value="NAD(P)-binding Rossmann-like Domain"/>
    <property type="match status" value="1"/>
</dbReference>
<dbReference type="HAMAP" id="MF_00435">
    <property type="entry name" value="IlvC"/>
    <property type="match status" value="1"/>
</dbReference>
<dbReference type="InterPro" id="IPR008927">
    <property type="entry name" value="6-PGluconate_DH-like_C_sf"/>
</dbReference>
<dbReference type="InterPro" id="IPR013023">
    <property type="entry name" value="KARI"/>
</dbReference>
<dbReference type="InterPro" id="IPR000506">
    <property type="entry name" value="KARI_C"/>
</dbReference>
<dbReference type="InterPro" id="IPR013116">
    <property type="entry name" value="KARI_N"/>
</dbReference>
<dbReference type="InterPro" id="IPR014359">
    <property type="entry name" value="KARI_prok"/>
</dbReference>
<dbReference type="InterPro" id="IPR036291">
    <property type="entry name" value="NAD(P)-bd_dom_sf"/>
</dbReference>
<dbReference type="NCBIfam" id="TIGR00465">
    <property type="entry name" value="ilvC"/>
    <property type="match status" value="1"/>
</dbReference>
<dbReference type="NCBIfam" id="NF004017">
    <property type="entry name" value="PRK05479.1"/>
    <property type="match status" value="1"/>
</dbReference>
<dbReference type="NCBIfam" id="NF009940">
    <property type="entry name" value="PRK13403.1"/>
    <property type="match status" value="1"/>
</dbReference>
<dbReference type="PANTHER" id="PTHR21371">
    <property type="entry name" value="KETOL-ACID REDUCTOISOMERASE, MITOCHONDRIAL"/>
    <property type="match status" value="1"/>
</dbReference>
<dbReference type="PANTHER" id="PTHR21371:SF1">
    <property type="entry name" value="KETOL-ACID REDUCTOISOMERASE, MITOCHONDRIAL"/>
    <property type="match status" value="1"/>
</dbReference>
<dbReference type="Pfam" id="PF01450">
    <property type="entry name" value="KARI_C"/>
    <property type="match status" value="1"/>
</dbReference>
<dbReference type="Pfam" id="PF07991">
    <property type="entry name" value="KARI_N"/>
    <property type="match status" value="1"/>
</dbReference>
<dbReference type="PIRSF" id="PIRSF000116">
    <property type="entry name" value="IlvC_gammaproteo"/>
    <property type="match status" value="1"/>
</dbReference>
<dbReference type="SUPFAM" id="SSF48179">
    <property type="entry name" value="6-phosphogluconate dehydrogenase C-terminal domain-like"/>
    <property type="match status" value="1"/>
</dbReference>
<dbReference type="SUPFAM" id="SSF51735">
    <property type="entry name" value="NAD(P)-binding Rossmann-fold domains"/>
    <property type="match status" value="1"/>
</dbReference>
<dbReference type="PROSITE" id="PS51851">
    <property type="entry name" value="KARI_C"/>
    <property type="match status" value="1"/>
</dbReference>
<dbReference type="PROSITE" id="PS51850">
    <property type="entry name" value="KARI_N"/>
    <property type="match status" value="1"/>
</dbReference>
<organism>
    <name type="scientific">Cereibacter sphaeroides (strain ATCC 17025 / ATH 2.4.3)</name>
    <name type="common">Rhodobacter sphaeroides</name>
    <dbReference type="NCBI Taxonomy" id="349102"/>
    <lineage>
        <taxon>Bacteria</taxon>
        <taxon>Pseudomonadati</taxon>
        <taxon>Pseudomonadota</taxon>
        <taxon>Alphaproteobacteria</taxon>
        <taxon>Rhodobacterales</taxon>
        <taxon>Paracoccaceae</taxon>
        <taxon>Cereibacter</taxon>
    </lineage>
</organism>
<evidence type="ECO:0000255" key="1">
    <source>
        <dbReference type="HAMAP-Rule" id="MF_00435"/>
    </source>
</evidence>
<evidence type="ECO:0000255" key="2">
    <source>
        <dbReference type="PROSITE-ProRule" id="PRU01197"/>
    </source>
</evidence>
<evidence type="ECO:0000255" key="3">
    <source>
        <dbReference type="PROSITE-ProRule" id="PRU01198"/>
    </source>
</evidence>
<keyword id="KW-0028">Amino-acid biosynthesis</keyword>
<keyword id="KW-0100">Branched-chain amino acid biosynthesis</keyword>
<keyword id="KW-0460">Magnesium</keyword>
<keyword id="KW-0479">Metal-binding</keyword>
<keyword id="KW-0521">NADP</keyword>
<keyword id="KW-0560">Oxidoreductase</keyword>
<accession>A4WQ93</accession>
<proteinExistence type="inferred from homology"/>
<reference key="1">
    <citation type="submission" date="2007-04" db="EMBL/GenBank/DDBJ databases">
        <title>Complete sequence of chromosome of Rhodobacter sphaeroides ATCC 17025.</title>
        <authorList>
            <consortium name="US DOE Joint Genome Institute"/>
            <person name="Copeland A."/>
            <person name="Lucas S."/>
            <person name="Lapidus A."/>
            <person name="Barry K."/>
            <person name="Detter J.C."/>
            <person name="Glavina del Rio T."/>
            <person name="Hammon N."/>
            <person name="Israni S."/>
            <person name="Dalin E."/>
            <person name="Tice H."/>
            <person name="Pitluck S."/>
            <person name="Chertkov O."/>
            <person name="Brettin T."/>
            <person name="Bruce D."/>
            <person name="Han C."/>
            <person name="Schmutz J."/>
            <person name="Larimer F."/>
            <person name="Land M."/>
            <person name="Hauser L."/>
            <person name="Kyrpides N."/>
            <person name="Kim E."/>
            <person name="Richardson P."/>
            <person name="Mackenzie C."/>
            <person name="Choudhary M."/>
            <person name="Donohue T.J."/>
            <person name="Kaplan S."/>
        </authorList>
    </citation>
    <scope>NUCLEOTIDE SEQUENCE [LARGE SCALE GENOMIC DNA]</scope>
    <source>
        <strain>ATCC 17025 / ATH 2.4.3</strain>
    </source>
</reference>